<reference key="1">
    <citation type="journal article" date="1995" name="Gene">
        <title>Cloning and characterization of the unusual restriction-modification system comprising two restriction endonucleases and one methyltransferase.</title>
        <authorList>
            <person name="Stankevicius K."/>
            <person name="Povilionis P."/>
            <person name="Lubys A."/>
            <person name="Menkevicius S."/>
            <person name="Janulaitis A."/>
        </authorList>
    </citation>
    <scope>NUCLEOTIDE SEQUENCE [GENOMIC DNA]</scope>
    <scope>FUNCTION</scope>
    <source>
        <strain>RFL47</strain>
    </source>
</reference>
<reference key="2">
    <citation type="journal article" date="2003" name="Nucleic Acids Res.">
        <title>A nomenclature for restriction enzymes, DNA methyltransferases, homing endonucleases and their genes.</title>
        <authorList>
            <person name="Roberts R.J."/>
            <person name="Belfort M."/>
            <person name="Bestor T."/>
            <person name="Bhagwat A.S."/>
            <person name="Bickle T.A."/>
            <person name="Bitinaite J."/>
            <person name="Blumenthal R.M."/>
            <person name="Degtyarev S.K."/>
            <person name="Dryden D.T."/>
            <person name="Dybvig K."/>
            <person name="Firman K."/>
            <person name="Gromova E.S."/>
            <person name="Gumport R.I."/>
            <person name="Halford S.E."/>
            <person name="Hattman S."/>
            <person name="Heitman J."/>
            <person name="Hornby D.P."/>
            <person name="Janulaitis A."/>
            <person name="Jeltsch A."/>
            <person name="Josephsen J."/>
            <person name="Kiss A."/>
            <person name="Klaenhammer T.R."/>
            <person name="Kobayashi I."/>
            <person name="Kong H."/>
            <person name="Krueger D.H."/>
            <person name="Lacks S."/>
            <person name="Marinus M.G."/>
            <person name="Miyahara M."/>
            <person name="Morgan R.D."/>
            <person name="Murray N.E."/>
            <person name="Nagaraja V."/>
            <person name="Piekarowicz A."/>
            <person name="Pingoud A."/>
            <person name="Raleigh E."/>
            <person name="Rao D.N."/>
            <person name="Reich N."/>
            <person name="Repin V.E."/>
            <person name="Selker E.U."/>
            <person name="Shaw P.C."/>
            <person name="Stein D.C."/>
            <person name="Stoddard B.L."/>
            <person name="Szybalski W."/>
            <person name="Trautner T.A."/>
            <person name="Van Etten J.L."/>
            <person name="Vitor J.M."/>
            <person name="Wilson G.G."/>
            <person name="Xu S.Y."/>
        </authorList>
    </citation>
    <scope>NOMENCLATURE</scope>
    <scope>SUBTYPE</scope>
</reference>
<organism>
    <name type="scientific">Escherichia coli</name>
    <dbReference type="NCBI Taxonomy" id="562"/>
    <lineage>
        <taxon>Bacteria</taxon>
        <taxon>Pseudomonadati</taxon>
        <taxon>Pseudomonadota</taxon>
        <taxon>Gammaproteobacteria</taxon>
        <taxon>Enterobacterales</taxon>
        <taxon>Enterobacteriaceae</taxon>
        <taxon>Escherichia</taxon>
    </lineage>
</organism>
<sequence length="230" mass="26864">MSKETSFVKNAEELAKQKMDAINPELSSKFKFLIKFLSQFPEACSKPRSKKMQNKVGQEEHIEYLARSFHESRLPRKPTPPTTVPDEVVSIVLNISFNIQPENLERIKEEHRLSMAAENIVGDLLERYLAEKLEPSGWIWCSGTSVKAVDFIHYDEKNNEWNLLQVKNRDNTENSSSSKIRDNTTIKKWFRTYSQRDATNWDNFPDEVSSKNLNEEDFRAFVKNYLVKII</sequence>
<evidence type="ECO:0000303" key="1">
    <source>
    </source>
</evidence>
<evidence type="ECO:0000303" key="2">
    <source>
    </source>
</evidence>
<evidence type="ECO:0000305" key="3">
    <source>
    </source>
</evidence>
<feature type="chain" id="PRO_0000077306" description="Type II restriction enzyme Eco47I">
    <location>
        <begin position="1"/>
        <end position="230"/>
    </location>
</feature>
<comment type="function">
    <text evidence="1 3">A P subtype restriction enzyme that recognizes the double-stranded sequence 5'-GGWCC-3' and cleaves after G-1.</text>
</comment>
<comment type="catalytic activity">
    <reaction>
        <text>Endonucleolytic cleavage of DNA to give specific double-stranded fragments with terminal 5'-phosphates.</text>
        <dbReference type="EC" id="3.1.21.4"/>
    </reaction>
</comment>
<proteinExistence type="predicted"/>
<gene>
    <name evidence="2" type="primary">eco47IR</name>
</gene>
<protein>
    <recommendedName>
        <fullName evidence="1">Type II restriction enzyme Eco47I</fullName>
        <shortName evidence="2">R.Eco47I</shortName>
        <ecNumber>3.1.21.4</ecNumber>
    </recommendedName>
    <alternativeName>
        <fullName>Endonuclease Eco47I</fullName>
    </alternativeName>
    <alternativeName>
        <fullName>Type-2 restriction enzyme Eco47I</fullName>
    </alternativeName>
</protein>
<accession>P50194</accession>
<keyword id="KW-0255">Endonuclease</keyword>
<keyword id="KW-0378">Hydrolase</keyword>
<keyword id="KW-0540">Nuclease</keyword>
<keyword id="KW-0680">Restriction system</keyword>
<dbReference type="EC" id="3.1.21.4"/>
<dbReference type="EMBL" id="X82105">
    <property type="protein sequence ID" value="CAA57630.1"/>
    <property type="molecule type" value="Genomic_DNA"/>
</dbReference>
<dbReference type="SMR" id="P50194"/>
<dbReference type="REBASE" id="930">
    <property type="entry name" value="Eco47I"/>
</dbReference>
<dbReference type="PRO" id="PR:P50194"/>
<dbReference type="GO" id="GO:0003677">
    <property type="term" value="F:DNA binding"/>
    <property type="evidence" value="ECO:0007669"/>
    <property type="project" value="InterPro"/>
</dbReference>
<dbReference type="GO" id="GO:0009036">
    <property type="term" value="F:type II site-specific deoxyribonuclease activity"/>
    <property type="evidence" value="ECO:0007669"/>
    <property type="project" value="UniProtKB-EC"/>
</dbReference>
<dbReference type="GO" id="GO:0009307">
    <property type="term" value="P:DNA restriction-modification system"/>
    <property type="evidence" value="ECO:0007669"/>
    <property type="project" value="UniProtKB-KW"/>
</dbReference>
<dbReference type="InterPro" id="IPR019070">
    <property type="entry name" value="Restrct_endonuc_II_SinI"/>
</dbReference>
<dbReference type="Pfam" id="PF09570">
    <property type="entry name" value="RE_SinI"/>
    <property type="match status" value="1"/>
</dbReference>
<name>T2E7_ECOLX</name>